<reference key="1">
    <citation type="journal article" date="2001" name="Chromosoma">
        <title>A conserved protein, Nuf2, is implicated in connecting the centromere to the spindle during chromosome segregation: a link between the kinetochore function and the spindle checkpoint.</title>
        <authorList>
            <person name="Nabetani A."/>
            <person name="Koujin T."/>
            <person name="Tsutsumi C."/>
            <person name="Haraguchi T."/>
            <person name="Hiraoka Y."/>
        </authorList>
    </citation>
    <scope>NUCLEOTIDE SEQUENCE [MRNA]</scope>
    <scope>VARIANT LEU-229</scope>
</reference>
<reference key="2">
    <citation type="journal article" date="2001" name="J. Cell Biol.">
        <title>The Ndc80p complex from Saccharomyces cerevisiae contains conserved centromere components and has a function in chromosome segregation.</title>
        <authorList>
            <person name="Wigge P.A."/>
            <person name="Kilmartin J.V."/>
        </authorList>
    </citation>
    <scope>NUCLEOTIDE SEQUENCE [MRNA]</scope>
    <scope>VARIANT LEU-229</scope>
</reference>
<reference key="3">
    <citation type="journal article" date="2004" name="Nat. Genet.">
        <title>Complete sequencing and characterization of 21,243 full-length human cDNAs.</title>
        <authorList>
            <person name="Ota T."/>
            <person name="Suzuki Y."/>
            <person name="Nishikawa T."/>
            <person name="Otsuki T."/>
            <person name="Sugiyama T."/>
            <person name="Irie R."/>
            <person name="Wakamatsu A."/>
            <person name="Hayashi K."/>
            <person name="Sato H."/>
            <person name="Nagai K."/>
            <person name="Kimura K."/>
            <person name="Makita H."/>
            <person name="Sekine M."/>
            <person name="Obayashi M."/>
            <person name="Nishi T."/>
            <person name="Shibahara T."/>
            <person name="Tanaka T."/>
            <person name="Ishii S."/>
            <person name="Yamamoto J."/>
            <person name="Saito K."/>
            <person name="Kawai Y."/>
            <person name="Isono Y."/>
            <person name="Nakamura Y."/>
            <person name="Nagahari K."/>
            <person name="Murakami K."/>
            <person name="Yasuda T."/>
            <person name="Iwayanagi T."/>
            <person name="Wagatsuma M."/>
            <person name="Shiratori A."/>
            <person name="Sudo H."/>
            <person name="Hosoiri T."/>
            <person name="Kaku Y."/>
            <person name="Kodaira H."/>
            <person name="Kondo H."/>
            <person name="Sugawara M."/>
            <person name="Takahashi M."/>
            <person name="Kanda K."/>
            <person name="Yokoi T."/>
            <person name="Furuya T."/>
            <person name="Kikkawa E."/>
            <person name="Omura Y."/>
            <person name="Abe K."/>
            <person name="Kamihara K."/>
            <person name="Katsuta N."/>
            <person name="Sato K."/>
            <person name="Tanikawa M."/>
            <person name="Yamazaki M."/>
            <person name="Ninomiya K."/>
            <person name="Ishibashi T."/>
            <person name="Yamashita H."/>
            <person name="Murakawa K."/>
            <person name="Fujimori K."/>
            <person name="Tanai H."/>
            <person name="Kimata M."/>
            <person name="Watanabe M."/>
            <person name="Hiraoka S."/>
            <person name="Chiba Y."/>
            <person name="Ishida S."/>
            <person name="Ono Y."/>
            <person name="Takiguchi S."/>
            <person name="Watanabe S."/>
            <person name="Yosida M."/>
            <person name="Hotuta T."/>
            <person name="Kusano J."/>
            <person name="Kanehori K."/>
            <person name="Takahashi-Fujii A."/>
            <person name="Hara H."/>
            <person name="Tanase T.-O."/>
            <person name="Nomura Y."/>
            <person name="Togiya S."/>
            <person name="Komai F."/>
            <person name="Hara R."/>
            <person name="Takeuchi K."/>
            <person name="Arita M."/>
            <person name="Imose N."/>
            <person name="Musashino K."/>
            <person name="Yuuki H."/>
            <person name="Oshima A."/>
            <person name="Sasaki N."/>
            <person name="Aotsuka S."/>
            <person name="Yoshikawa Y."/>
            <person name="Matsunawa H."/>
            <person name="Ichihara T."/>
            <person name="Shiohata N."/>
            <person name="Sano S."/>
            <person name="Moriya S."/>
            <person name="Momiyama H."/>
            <person name="Satoh N."/>
            <person name="Takami S."/>
            <person name="Terashima Y."/>
            <person name="Suzuki O."/>
            <person name="Nakagawa S."/>
            <person name="Senoh A."/>
            <person name="Mizoguchi H."/>
            <person name="Goto Y."/>
            <person name="Shimizu F."/>
            <person name="Wakebe H."/>
            <person name="Hishigaki H."/>
            <person name="Watanabe T."/>
            <person name="Sugiyama A."/>
            <person name="Takemoto M."/>
            <person name="Kawakami B."/>
            <person name="Yamazaki M."/>
            <person name="Watanabe K."/>
            <person name="Kumagai A."/>
            <person name="Itakura S."/>
            <person name="Fukuzumi Y."/>
            <person name="Fujimori Y."/>
            <person name="Komiyama M."/>
            <person name="Tashiro H."/>
            <person name="Tanigami A."/>
            <person name="Fujiwara T."/>
            <person name="Ono T."/>
            <person name="Yamada K."/>
            <person name="Fujii Y."/>
            <person name="Ozaki K."/>
            <person name="Hirao M."/>
            <person name="Ohmori Y."/>
            <person name="Kawabata A."/>
            <person name="Hikiji T."/>
            <person name="Kobatake N."/>
            <person name="Inagaki H."/>
            <person name="Ikema Y."/>
            <person name="Okamoto S."/>
            <person name="Okitani R."/>
            <person name="Kawakami T."/>
            <person name="Noguchi S."/>
            <person name="Itoh T."/>
            <person name="Shigeta K."/>
            <person name="Senba T."/>
            <person name="Matsumura K."/>
            <person name="Nakajima Y."/>
            <person name="Mizuno T."/>
            <person name="Morinaga M."/>
            <person name="Sasaki M."/>
            <person name="Togashi T."/>
            <person name="Oyama M."/>
            <person name="Hata H."/>
            <person name="Watanabe M."/>
            <person name="Komatsu T."/>
            <person name="Mizushima-Sugano J."/>
            <person name="Satoh T."/>
            <person name="Shirai Y."/>
            <person name="Takahashi Y."/>
            <person name="Nakagawa K."/>
            <person name="Okumura K."/>
            <person name="Nagase T."/>
            <person name="Nomura N."/>
            <person name="Kikuchi H."/>
            <person name="Masuho Y."/>
            <person name="Yamashita R."/>
            <person name="Nakai K."/>
            <person name="Yada T."/>
            <person name="Nakamura Y."/>
            <person name="Ohara O."/>
            <person name="Isogai T."/>
            <person name="Sugano S."/>
        </authorList>
    </citation>
    <scope>NUCLEOTIDE SEQUENCE [LARGE SCALE MRNA]</scope>
    <source>
        <tissue>Testis</tissue>
    </source>
</reference>
<reference key="4">
    <citation type="journal article" date="2006" name="Nature">
        <title>The DNA sequence and biological annotation of human chromosome 1.</title>
        <authorList>
            <person name="Gregory S.G."/>
            <person name="Barlow K.F."/>
            <person name="McLay K.E."/>
            <person name="Kaul R."/>
            <person name="Swarbreck D."/>
            <person name="Dunham A."/>
            <person name="Scott C.E."/>
            <person name="Howe K.L."/>
            <person name="Woodfine K."/>
            <person name="Spencer C.C.A."/>
            <person name="Jones M.C."/>
            <person name="Gillson C."/>
            <person name="Searle S."/>
            <person name="Zhou Y."/>
            <person name="Kokocinski F."/>
            <person name="McDonald L."/>
            <person name="Evans R."/>
            <person name="Phillips K."/>
            <person name="Atkinson A."/>
            <person name="Cooper R."/>
            <person name="Jones C."/>
            <person name="Hall R.E."/>
            <person name="Andrews T.D."/>
            <person name="Lloyd C."/>
            <person name="Ainscough R."/>
            <person name="Almeida J.P."/>
            <person name="Ambrose K.D."/>
            <person name="Anderson F."/>
            <person name="Andrew R.W."/>
            <person name="Ashwell R.I.S."/>
            <person name="Aubin K."/>
            <person name="Babbage A.K."/>
            <person name="Bagguley C.L."/>
            <person name="Bailey J."/>
            <person name="Beasley H."/>
            <person name="Bethel G."/>
            <person name="Bird C.P."/>
            <person name="Bray-Allen S."/>
            <person name="Brown J.Y."/>
            <person name="Brown A.J."/>
            <person name="Buckley D."/>
            <person name="Burton J."/>
            <person name="Bye J."/>
            <person name="Carder C."/>
            <person name="Chapman J.C."/>
            <person name="Clark S.Y."/>
            <person name="Clarke G."/>
            <person name="Clee C."/>
            <person name="Cobley V."/>
            <person name="Collier R.E."/>
            <person name="Corby N."/>
            <person name="Coville G.J."/>
            <person name="Davies J."/>
            <person name="Deadman R."/>
            <person name="Dunn M."/>
            <person name="Earthrowl M."/>
            <person name="Ellington A.G."/>
            <person name="Errington H."/>
            <person name="Frankish A."/>
            <person name="Frankland J."/>
            <person name="French L."/>
            <person name="Garner P."/>
            <person name="Garnett J."/>
            <person name="Gay L."/>
            <person name="Ghori M.R.J."/>
            <person name="Gibson R."/>
            <person name="Gilby L.M."/>
            <person name="Gillett W."/>
            <person name="Glithero R.J."/>
            <person name="Grafham D.V."/>
            <person name="Griffiths C."/>
            <person name="Griffiths-Jones S."/>
            <person name="Grocock R."/>
            <person name="Hammond S."/>
            <person name="Harrison E.S.I."/>
            <person name="Hart E."/>
            <person name="Haugen E."/>
            <person name="Heath P.D."/>
            <person name="Holmes S."/>
            <person name="Holt K."/>
            <person name="Howden P.J."/>
            <person name="Hunt A.R."/>
            <person name="Hunt S.E."/>
            <person name="Hunter G."/>
            <person name="Isherwood J."/>
            <person name="James R."/>
            <person name="Johnson C."/>
            <person name="Johnson D."/>
            <person name="Joy A."/>
            <person name="Kay M."/>
            <person name="Kershaw J.K."/>
            <person name="Kibukawa M."/>
            <person name="Kimberley A.M."/>
            <person name="King A."/>
            <person name="Knights A.J."/>
            <person name="Lad H."/>
            <person name="Laird G."/>
            <person name="Lawlor S."/>
            <person name="Leongamornlert D.A."/>
            <person name="Lloyd D.M."/>
            <person name="Loveland J."/>
            <person name="Lovell J."/>
            <person name="Lush M.J."/>
            <person name="Lyne R."/>
            <person name="Martin S."/>
            <person name="Mashreghi-Mohammadi M."/>
            <person name="Matthews L."/>
            <person name="Matthews N.S.W."/>
            <person name="McLaren S."/>
            <person name="Milne S."/>
            <person name="Mistry S."/>
            <person name="Moore M.J.F."/>
            <person name="Nickerson T."/>
            <person name="O'Dell C.N."/>
            <person name="Oliver K."/>
            <person name="Palmeiri A."/>
            <person name="Palmer S.A."/>
            <person name="Parker A."/>
            <person name="Patel D."/>
            <person name="Pearce A.V."/>
            <person name="Peck A.I."/>
            <person name="Pelan S."/>
            <person name="Phelps K."/>
            <person name="Phillimore B.J."/>
            <person name="Plumb R."/>
            <person name="Rajan J."/>
            <person name="Raymond C."/>
            <person name="Rouse G."/>
            <person name="Saenphimmachak C."/>
            <person name="Sehra H.K."/>
            <person name="Sheridan E."/>
            <person name="Shownkeen R."/>
            <person name="Sims S."/>
            <person name="Skuce C.D."/>
            <person name="Smith M."/>
            <person name="Steward C."/>
            <person name="Subramanian S."/>
            <person name="Sycamore N."/>
            <person name="Tracey A."/>
            <person name="Tromans A."/>
            <person name="Van Helmond Z."/>
            <person name="Wall M."/>
            <person name="Wallis J.M."/>
            <person name="White S."/>
            <person name="Whitehead S.L."/>
            <person name="Wilkinson J.E."/>
            <person name="Willey D.L."/>
            <person name="Williams H."/>
            <person name="Wilming L."/>
            <person name="Wray P.W."/>
            <person name="Wu Z."/>
            <person name="Coulson A."/>
            <person name="Vaudin M."/>
            <person name="Sulston J.E."/>
            <person name="Durbin R.M."/>
            <person name="Hubbard T."/>
            <person name="Wooster R."/>
            <person name="Dunham I."/>
            <person name="Carter N.P."/>
            <person name="McVean G."/>
            <person name="Ross M.T."/>
            <person name="Harrow J."/>
            <person name="Olson M.V."/>
            <person name="Beck S."/>
            <person name="Rogers J."/>
            <person name="Bentley D.R."/>
        </authorList>
    </citation>
    <scope>NUCLEOTIDE SEQUENCE [LARGE SCALE GENOMIC DNA]</scope>
</reference>
<reference key="5">
    <citation type="journal article" date="2004" name="Genome Res.">
        <title>The status, quality, and expansion of the NIH full-length cDNA project: the Mammalian Gene Collection (MGC).</title>
        <authorList>
            <consortium name="The MGC Project Team"/>
        </authorList>
    </citation>
    <scope>NUCLEOTIDE SEQUENCE [LARGE SCALE MRNA]</scope>
    <source>
        <tissue>Chronic myeloid leukemia cell</tissue>
        <tissue>Lung</tissue>
    </source>
</reference>
<reference key="6">
    <citation type="journal article" date="2002" name="J. Cell Biol.">
        <title>hNuf2 inhibition blocks stable kinetochore-microtubule attachment and induces mitotic cell death in HeLa cells.</title>
        <authorList>
            <person name="DeLuca J.G."/>
            <person name="Moree B."/>
            <person name="Hickey J.M."/>
            <person name="Kilmartin J.V."/>
            <person name="Salmon E.D."/>
        </authorList>
    </citation>
    <scope>FUNCTION</scope>
</reference>
<reference key="7">
    <citation type="journal article" date="2003" name="Curr. Biol.">
        <title>Nuf2 and Hec1 are required for retention of the checkpoint proteins Mad1 and Mad2 to kinetochores.</title>
        <authorList>
            <person name="DeLuca J.G."/>
            <person name="Howell B.J."/>
            <person name="Canman J.C."/>
            <person name="Hickey J.M."/>
            <person name="Fang G."/>
            <person name="Salmon E.D."/>
        </authorList>
    </citation>
    <scope>FUNCTION</scope>
    <scope>SUBCELLULAR LOCATION</scope>
</reference>
<reference key="8">
    <citation type="journal article" date="2004" name="Chromosoma">
        <title>Kinetochore localization and microtubule interaction of the human spindle checkpoint kinase Mps1.</title>
        <authorList>
            <person name="Stucke V.M."/>
            <person name="Baumann C."/>
            <person name="Nigg E.A."/>
        </authorList>
    </citation>
    <scope>FUNCTION</scope>
    <scope>SUBCELLULAR LOCATION</scope>
</reference>
<reference key="9">
    <citation type="journal article" date="2004" name="Curr. Biol.">
        <title>The RanGAP1-RanBP2 complex is essential for microtubule-kinetochore interactions in vivo.</title>
        <authorList>
            <person name="Joseph J."/>
            <person name="Liu S.-T."/>
            <person name="Jablonski S.A."/>
            <person name="Yen T.J."/>
            <person name="Dasso M."/>
        </authorList>
    </citation>
    <scope>FUNCTION</scope>
</reference>
<reference key="10">
    <citation type="journal article" date="2004" name="Dev. Cell">
        <title>Timing and checkpoints in the regulation of mitotic progression.</title>
        <authorList>
            <person name="Meraldi P."/>
            <person name="Draviam V.M."/>
            <person name="Sorger P.K."/>
        </authorList>
    </citation>
    <scope>FUNCTION</scope>
    <scope>SUBCELLULAR LOCATION</scope>
</reference>
<reference key="11">
    <citation type="journal article" date="2004" name="J. Biol. Chem.">
        <title>Identification of two novel components of the human NDC80 kinetochore complex.</title>
        <authorList>
            <person name="Bharadwaj R."/>
            <person name="Qi W."/>
            <person name="Yu H."/>
        </authorList>
    </citation>
    <scope>IDENTIFICATION BY MASS SPECTROMETRY</scope>
    <scope>IDENTIFICATION IN THE NDC80 COMPLEX</scope>
</reference>
<reference key="12">
    <citation type="journal article" date="2004" name="Mol. Cell. Proteomics">
        <title>Identification of the substrates and interaction proteins of aurora kinases from a protein-protein interaction model.</title>
        <authorList>
            <person name="Tien A.-C."/>
            <person name="Lin M.-H."/>
            <person name="Su L.-J."/>
            <person name="Hong Y.-R."/>
            <person name="Cheng T.-S."/>
            <person name="Lee Y.-C.G."/>
            <person name="Lin W.-J."/>
            <person name="Still I.H."/>
            <person name="Huang C.-Y.F."/>
        </authorList>
    </citation>
    <scope>INTERACTION WITH AURKB AND NDC80</scope>
    <scope>PHOSPHORYLATION BY AURKA AND AURKB</scope>
</reference>
<reference key="13">
    <citation type="journal article" date="2005" name="J. Biol. Chem.">
        <title>Architecture of the human Ndc80-Hec1 complex, a critical constituent of the outer kinetochore.</title>
        <authorList>
            <person name="Ciferri C."/>
            <person name="De Luca J."/>
            <person name="Monzani S."/>
            <person name="Ferrari K.J."/>
            <person name="Ristic D."/>
            <person name="Wyman C."/>
            <person name="Stark H."/>
            <person name="Kilmartin J."/>
            <person name="Salmon E.D."/>
            <person name="Musacchio A."/>
        </authorList>
    </citation>
    <scope>CHARACTERIZATION OF THE NDC80 COMPLEX</scope>
    <scope>SUBCELLULAR LOCATION</scope>
</reference>
<reference key="14">
    <citation type="journal article" date="2005" name="Mol. Biol. Cell">
        <title>Hec1 and Nuf2 are core components of the kinetochore outer plate essential for organizing microtubule attachment sites.</title>
        <authorList>
            <person name="DeLuca J.G."/>
            <person name="Dong Y."/>
            <person name="Hergert P."/>
            <person name="Strauss J."/>
            <person name="Hickey J.M."/>
            <person name="Salmon E.D."/>
            <person name="McEwen B.F."/>
        </authorList>
    </citation>
    <scope>FUNCTION</scope>
</reference>
<reference key="15">
    <citation type="journal article" date="2007" name="J. Biol. Chem.">
        <title>Human NUF2 interacts with centromere-associated protein E and is essential for a stable spindle microtubule-kinetochore attachment.</title>
        <authorList>
            <person name="Liu D."/>
            <person name="Ding X."/>
            <person name="Du J."/>
            <person name="Cai X."/>
            <person name="Huang Y."/>
            <person name="Ward T."/>
            <person name="Shaw A."/>
            <person name="Yang Y."/>
            <person name="Hu R."/>
            <person name="Jin C."/>
            <person name="Yao X."/>
        </authorList>
    </citation>
    <scope>FUNCTION</scope>
    <scope>INTERACTION WITH CENPE</scope>
    <scope>SUBCELLULAR LOCATION</scope>
</reference>
<reference key="16">
    <citation type="journal article" date="2008" name="Proc. Natl. Acad. Sci. U.S.A.">
        <title>A quantitative atlas of mitotic phosphorylation.</title>
        <authorList>
            <person name="Dephoure N."/>
            <person name="Zhou C."/>
            <person name="Villen J."/>
            <person name="Beausoleil S.A."/>
            <person name="Bakalarski C.E."/>
            <person name="Elledge S.J."/>
            <person name="Gygi S.P."/>
        </authorList>
    </citation>
    <scope>IDENTIFICATION BY MASS SPECTROMETRY [LARGE SCALE ANALYSIS]</scope>
    <source>
        <tissue>Cervix carcinoma</tissue>
    </source>
</reference>
<reference key="17">
    <citation type="journal article" date="2011" name="BMC Syst. Biol.">
        <title>Initial characterization of the human central proteome.</title>
        <authorList>
            <person name="Burkard T.R."/>
            <person name="Planyavsky M."/>
            <person name="Kaupe I."/>
            <person name="Breitwieser F.P."/>
            <person name="Buerckstuemmer T."/>
            <person name="Bennett K.L."/>
            <person name="Superti-Furga G."/>
            <person name="Colinge J."/>
        </authorList>
    </citation>
    <scope>IDENTIFICATION BY MASS SPECTROMETRY [LARGE SCALE ANALYSIS]</scope>
</reference>
<reference key="18">
    <citation type="journal article" date="2012" name="Dev. Cell">
        <title>The kinetochore-bound Ska1 complex tracks depolymerizing microtubules and binds to curved protofilaments.</title>
        <authorList>
            <person name="Schmidt J.C."/>
            <person name="Arthanari H."/>
            <person name="Boeszoermenyi A."/>
            <person name="Dashkevich N.M."/>
            <person name="Wilson-Kubalek E.M."/>
            <person name="Monnier N."/>
            <person name="Markus M."/>
            <person name="Oberer M."/>
            <person name="Milligan R.A."/>
            <person name="Bathe M."/>
            <person name="Wagner G."/>
            <person name="Grishchuk E.L."/>
            <person name="Cheeseman I.M."/>
        </authorList>
    </citation>
    <scope>FUNCTION</scope>
</reference>
<reference key="19">
    <citation type="journal article" date="2012" name="Proc. Natl. Acad. Sci. U.S.A.">
        <title>N-terminal acetylome analyses and functional insights of the N-terminal acetyltransferase NatB.</title>
        <authorList>
            <person name="Van Damme P."/>
            <person name="Lasa M."/>
            <person name="Polevoda B."/>
            <person name="Gazquez C."/>
            <person name="Elosegui-Artola A."/>
            <person name="Kim D.S."/>
            <person name="De Juan-Pardo E."/>
            <person name="Demeyer K."/>
            <person name="Hole K."/>
            <person name="Larrea E."/>
            <person name="Timmerman E."/>
            <person name="Prieto J."/>
            <person name="Arnesen T."/>
            <person name="Sherman F."/>
            <person name="Gevaert K."/>
            <person name="Aldabe R."/>
        </authorList>
    </citation>
    <scope>ACETYLATION [LARGE SCALE ANALYSIS] AT MET-1</scope>
    <scope>IDENTIFICATION BY MASS SPECTROMETRY [LARGE SCALE ANALYSIS]</scope>
</reference>
<reference key="20">
    <citation type="journal article" date="2013" name="J. Proteome Res.">
        <title>Toward a comprehensive characterization of a human cancer cell phosphoproteome.</title>
        <authorList>
            <person name="Zhou H."/>
            <person name="Di Palma S."/>
            <person name="Preisinger C."/>
            <person name="Peng M."/>
            <person name="Polat A.N."/>
            <person name="Heck A.J."/>
            <person name="Mohammed S."/>
        </authorList>
    </citation>
    <scope>PHOSPHORYLATION [LARGE SCALE ANALYSIS] AT SER-171 AND SER-247</scope>
    <scope>IDENTIFICATION BY MASS SPECTROMETRY [LARGE SCALE ANALYSIS]</scope>
    <source>
        <tissue>Cervix carcinoma</tissue>
        <tissue>Erythroleukemia</tissue>
    </source>
</reference>
<proteinExistence type="evidence at protein level"/>
<protein>
    <recommendedName>
        <fullName>Kinetochore protein Nuf2</fullName>
        <shortName>hNuf2</shortName>
        <shortName>hNuf2R</shortName>
        <shortName>hsNuf2</shortName>
    </recommendedName>
    <alternativeName>
        <fullName>Cell division cycle-associated protein 1</fullName>
    </alternativeName>
</protein>
<sequence length="464" mass="54304">METLSFPRYNVAEIVIHIRNKILTGADGKNLTKNDLYPNPKPEVLHMIYMRALQIVYGIRLEHFYMMPVNSEVMYPHLMEGFLPFSNLVTHLDSFLPICRVNDFETADILCPKAKRTSRFLSGIINFIHFREACRETYMEFLWQYKSSADKMQQLNAAHQEALMKLERLDSVPVEEQEEFKQLSDGIQELQQSLNQDFHQKTIVLQEGNSQKKSNISEKTKRLNELKLSVVSLKEIQESLKTKIVDSPEKLKNYKEKMKDTVQKLKNARQEVVEKYEIYGDSVDCLPSCQLEVQLYQKKIQDLSDNREKLASILKESLNLEDQIESDESELKKLKTEENSFKRLMIVKKEKLATAQFKINKKHEDVKQYKRTVIEDCNKVQEKRGAVYERVTTINQEIQKIKLGIQQLKDAAEREKLKSQEIFLNLKTALEKYHDGIEKAAEDSYAKIDEKTAELKRKMFKMST</sequence>
<dbReference type="EMBL" id="AB050577">
    <property type="protein sequence ID" value="BAB59141.1"/>
    <property type="molecule type" value="mRNA"/>
</dbReference>
<dbReference type="EMBL" id="AB050578">
    <property type="protein sequence ID" value="BAB59142.1"/>
    <property type="molecule type" value="mRNA"/>
</dbReference>
<dbReference type="EMBL" id="AF326731">
    <property type="protein sequence ID" value="AAK01426.1"/>
    <property type="molecule type" value="mRNA"/>
</dbReference>
<dbReference type="EMBL" id="AK093348">
    <property type="protein sequence ID" value="BAC04140.1"/>
    <property type="molecule type" value="mRNA"/>
</dbReference>
<dbReference type="EMBL" id="AL592435">
    <property type="status" value="NOT_ANNOTATED_CDS"/>
    <property type="molecule type" value="Genomic_DNA"/>
</dbReference>
<dbReference type="EMBL" id="BC008489">
    <property type="protein sequence ID" value="AAH08489.1"/>
    <property type="molecule type" value="mRNA"/>
</dbReference>
<dbReference type="EMBL" id="BC021171">
    <property type="protein sequence ID" value="AAH21171.2"/>
    <property type="molecule type" value="mRNA"/>
</dbReference>
<dbReference type="CCDS" id="CCDS1245.1"/>
<dbReference type="RefSeq" id="NP_113611.2">
    <property type="nucleotide sequence ID" value="NM_031423.4"/>
</dbReference>
<dbReference type="RefSeq" id="NP_663735.2">
    <property type="nucleotide sequence ID" value="NM_145697.3"/>
</dbReference>
<dbReference type="RefSeq" id="XP_024305880.1">
    <property type="nucleotide sequence ID" value="XM_024450112.2"/>
</dbReference>
<dbReference type="RefSeq" id="XP_024305881.1">
    <property type="nucleotide sequence ID" value="XM_024450113.2"/>
</dbReference>
<dbReference type="RefSeq" id="XP_054194953.1">
    <property type="nucleotide sequence ID" value="XM_054338978.1"/>
</dbReference>
<dbReference type="RefSeq" id="XP_054194954.1">
    <property type="nucleotide sequence ID" value="XM_054338979.1"/>
</dbReference>
<dbReference type="PDB" id="2VE7">
    <property type="method" value="X-ray"/>
    <property type="resolution" value="2.88 A"/>
    <property type="chains" value="C/D=1-169"/>
</dbReference>
<dbReference type="PDB" id="3IZ0">
    <property type="method" value="EM"/>
    <property type="chains" value="D/F=1-169"/>
</dbReference>
<dbReference type="PDB" id="8G0P">
    <property type="method" value="X-ray"/>
    <property type="resolution" value="2.00 A"/>
    <property type="chains" value="B=252-347"/>
</dbReference>
<dbReference type="PDBsum" id="2VE7"/>
<dbReference type="PDBsum" id="3IZ0"/>
<dbReference type="PDBsum" id="8G0P"/>
<dbReference type="EMDB" id="EMD-2549"/>
<dbReference type="SMR" id="Q9BZD4"/>
<dbReference type="BioGRID" id="123673">
    <property type="interactions" value="129"/>
</dbReference>
<dbReference type="ComplexPortal" id="CPX-550">
    <property type="entry name" value="Ndc80 complex"/>
</dbReference>
<dbReference type="CORUM" id="Q9BZD4"/>
<dbReference type="DIP" id="DIP-36119N"/>
<dbReference type="FunCoup" id="Q9BZD4">
    <property type="interactions" value="955"/>
</dbReference>
<dbReference type="IntAct" id="Q9BZD4">
    <property type="interactions" value="72"/>
</dbReference>
<dbReference type="MINT" id="Q9BZD4"/>
<dbReference type="STRING" id="9606.ENSP00000271452"/>
<dbReference type="GlyGen" id="Q9BZD4">
    <property type="glycosylation" value="2 sites, 1 N-linked glycan (1 site), 1 O-linked glycan (1 site)"/>
</dbReference>
<dbReference type="iPTMnet" id="Q9BZD4"/>
<dbReference type="PhosphoSitePlus" id="Q9BZD4"/>
<dbReference type="BioMuta" id="NUF2"/>
<dbReference type="DMDM" id="115311829"/>
<dbReference type="jPOST" id="Q9BZD4"/>
<dbReference type="MassIVE" id="Q9BZD4"/>
<dbReference type="PaxDb" id="9606-ENSP00000271452"/>
<dbReference type="PeptideAtlas" id="Q9BZD4"/>
<dbReference type="ProteomicsDB" id="79815"/>
<dbReference type="Pumba" id="Q9BZD4"/>
<dbReference type="Antibodypedia" id="34328">
    <property type="antibodies" value="211 antibodies from 31 providers"/>
</dbReference>
<dbReference type="DNASU" id="83540"/>
<dbReference type="Ensembl" id="ENST00000271452.8">
    <property type="protein sequence ID" value="ENSP00000271452.3"/>
    <property type="gene ID" value="ENSG00000143228.13"/>
</dbReference>
<dbReference type="Ensembl" id="ENST00000367900.7">
    <property type="protein sequence ID" value="ENSP00000356875.3"/>
    <property type="gene ID" value="ENSG00000143228.13"/>
</dbReference>
<dbReference type="GeneID" id="83540"/>
<dbReference type="KEGG" id="hsa:83540"/>
<dbReference type="MANE-Select" id="ENST00000271452.8">
    <property type="protein sequence ID" value="ENSP00000271452.3"/>
    <property type="RefSeq nucleotide sequence ID" value="NM_145697.3"/>
    <property type="RefSeq protein sequence ID" value="NP_663735.2"/>
</dbReference>
<dbReference type="UCSC" id="uc001gcq.2">
    <property type="organism name" value="human"/>
</dbReference>
<dbReference type="AGR" id="HGNC:14621"/>
<dbReference type="CTD" id="83540"/>
<dbReference type="DisGeNET" id="83540"/>
<dbReference type="GeneCards" id="NUF2"/>
<dbReference type="HGNC" id="HGNC:14621">
    <property type="gene designation" value="NUF2"/>
</dbReference>
<dbReference type="HPA" id="ENSG00000143228">
    <property type="expression patterns" value="Group enriched (bone marrow, lymphoid tissue, testis)"/>
</dbReference>
<dbReference type="MalaCards" id="NUF2"/>
<dbReference type="MIM" id="611772">
    <property type="type" value="gene"/>
</dbReference>
<dbReference type="neXtProt" id="NX_Q9BZD4"/>
<dbReference type="OpenTargets" id="ENSG00000143228"/>
<dbReference type="PharmGKB" id="PA162398215"/>
<dbReference type="VEuPathDB" id="HostDB:ENSG00000143228"/>
<dbReference type="eggNOG" id="KOG4438">
    <property type="taxonomic scope" value="Eukaryota"/>
</dbReference>
<dbReference type="GeneTree" id="ENSGT00390000004199"/>
<dbReference type="InParanoid" id="Q9BZD4"/>
<dbReference type="OMA" id="YLKMEAH"/>
<dbReference type="OrthoDB" id="8194677at2759"/>
<dbReference type="PAN-GO" id="Q9BZD4">
    <property type="GO annotations" value="6 GO annotations based on evolutionary models"/>
</dbReference>
<dbReference type="PhylomeDB" id="Q9BZD4"/>
<dbReference type="TreeFam" id="TF101067"/>
<dbReference type="PathwayCommons" id="Q9BZD4"/>
<dbReference type="Reactome" id="R-HSA-141444">
    <property type="pathway name" value="Amplification of signal from unattached kinetochores via a MAD2 inhibitory signal"/>
</dbReference>
<dbReference type="Reactome" id="R-HSA-2467813">
    <property type="pathway name" value="Separation of Sister Chromatids"/>
</dbReference>
<dbReference type="Reactome" id="R-HSA-2500257">
    <property type="pathway name" value="Resolution of Sister Chromatid Cohesion"/>
</dbReference>
<dbReference type="Reactome" id="R-HSA-5663220">
    <property type="pathway name" value="RHO GTPases Activate Formins"/>
</dbReference>
<dbReference type="Reactome" id="R-HSA-68877">
    <property type="pathway name" value="Mitotic Prometaphase"/>
</dbReference>
<dbReference type="Reactome" id="R-HSA-9648025">
    <property type="pathway name" value="EML4 and NUDC in mitotic spindle formation"/>
</dbReference>
<dbReference type="SignaLink" id="Q9BZD4"/>
<dbReference type="SIGNOR" id="Q9BZD4"/>
<dbReference type="BioGRID-ORCS" id="83540">
    <property type="hits" value="801 hits in 1134 CRISPR screens"/>
</dbReference>
<dbReference type="CD-CODE" id="8C2F96ED">
    <property type="entry name" value="Centrosome"/>
</dbReference>
<dbReference type="GeneWiki" id="NUF2"/>
<dbReference type="GenomeRNAi" id="83540"/>
<dbReference type="Pharos" id="Q9BZD4">
    <property type="development level" value="Tbio"/>
</dbReference>
<dbReference type="PRO" id="PR:Q9BZD4"/>
<dbReference type="Proteomes" id="UP000005640">
    <property type="component" value="Chromosome 1"/>
</dbReference>
<dbReference type="RNAct" id="Q9BZD4">
    <property type="molecule type" value="protein"/>
</dbReference>
<dbReference type="Bgee" id="ENSG00000143228">
    <property type="expression patterns" value="Expressed in ventricular zone and 125 other cell types or tissues"/>
</dbReference>
<dbReference type="ExpressionAtlas" id="Q9BZD4">
    <property type="expression patterns" value="baseline and differential"/>
</dbReference>
<dbReference type="GO" id="GO:0005829">
    <property type="term" value="C:cytosol"/>
    <property type="evidence" value="ECO:0000314"/>
    <property type="project" value="HPA"/>
</dbReference>
<dbReference type="GO" id="GO:0000776">
    <property type="term" value="C:kinetochore"/>
    <property type="evidence" value="ECO:0000314"/>
    <property type="project" value="HPA"/>
</dbReference>
<dbReference type="GO" id="GO:0016020">
    <property type="term" value="C:membrane"/>
    <property type="evidence" value="ECO:0007005"/>
    <property type="project" value="UniProtKB"/>
</dbReference>
<dbReference type="GO" id="GO:0031262">
    <property type="term" value="C:Ndc80 complex"/>
    <property type="evidence" value="ECO:0000314"/>
    <property type="project" value="UniProtKB"/>
</dbReference>
<dbReference type="GO" id="GO:0005654">
    <property type="term" value="C:nucleoplasm"/>
    <property type="evidence" value="ECO:0000314"/>
    <property type="project" value="HPA"/>
</dbReference>
<dbReference type="GO" id="GO:0000940">
    <property type="term" value="C:outer kinetochore"/>
    <property type="evidence" value="ECO:0000314"/>
    <property type="project" value="UniProtKB"/>
</dbReference>
<dbReference type="GO" id="GO:0008017">
    <property type="term" value="F:microtubule binding"/>
    <property type="evidence" value="ECO:0000315"/>
    <property type="project" value="UniProtKB"/>
</dbReference>
<dbReference type="GO" id="GO:0044877">
    <property type="term" value="F:protein-containing complex binding"/>
    <property type="evidence" value="ECO:0000318"/>
    <property type="project" value="GO_Central"/>
</dbReference>
<dbReference type="GO" id="GO:0051315">
    <property type="term" value="P:attachment of mitotic spindle microtubules to kinetochore"/>
    <property type="evidence" value="ECO:0000318"/>
    <property type="project" value="GO_Central"/>
</dbReference>
<dbReference type="GO" id="GO:0008608">
    <property type="term" value="P:attachment of spindle microtubules to kinetochore"/>
    <property type="evidence" value="ECO:0000314"/>
    <property type="project" value="ComplexPortal"/>
</dbReference>
<dbReference type="GO" id="GO:0051301">
    <property type="term" value="P:cell division"/>
    <property type="evidence" value="ECO:0007669"/>
    <property type="project" value="UniProtKB-KW"/>
</dbReference>
<dbReference type="GO" id="GO:0007059">
    <property type="term" value="P:chromosome segregation"/>
    <property type="evidence" value="ECO:0000303"/>
    <property type="project" value="UniProtKB"/>
</dbReference>
<dbReference type="GO" id="GO:0051383">
    <property type="term" value="P:kinetochore organization"/>
    <property type="evidence" value="ECO:0000318"/>
    <property type="project" value="GO_Central"/>
</dbReference>
<dbReference type="GO" id="GO:0045132">
    <property type="term" value="P:meiotic chromosome segregation"/>
    <property type="evidence" value="ECO:0000318"/>
    <property type="project" value="GO_Central"/>
</dbReference>
<dbReference type="GO" id="GO:0007094">
    <property type="term" value="P:mitotic spindle assembly checkpoint signaling"/>
    <property type="evidence" value="ECO:0000303"/>
    <property type="project" value="ComplexPortal"/>
</dbReference>
<dbReference type="GO" id="GO:0007052">
    <property type="term" value="P:mitotic spindle organization"/>
    <property type="evidence" value="ECO:0000318"/>
    <property type="project" value="GO_Central"/>
</dbReference>
<dbReference type="FunFam" id="1.10.418.60:FF:000001">
    <property type="entry name" value="NDC80 kinetochore complex component NUF2"/>
    <property type="match status" value="1"/>
</dbReference>
<dbReference type="Gene3D" id="1.10.418.60">
    <property type="entry name" value="Ncd80 complex, Nuf2 subunit"/>
    <property type="match status" value="1"/>
</dbReference>
<dbReference type="IDEAL" id="IID00393"/>
<dbReference type="InterPro" id="IPR005549">
    <property type="entry name" value="Kinetochore_Nuf2_N"/>
</dbReference>
<dbReference type="InterPro" id="IPR038275">
    <property type="entry name" value="Nuf2_N_sf"/>
</dbReference>
<dbReference type="PANTHER" id="PTHR21650:SF2">
    <property type="entry name" value="KINETOCHORE PROTEIN NUF2"/>
    <property type="match status" value="1"/>
</dbReference>
<dbReference type="PANTHER" id="PTHR21650">
    <property type="entry name" value="MEMBRALIN/KINETOCHORE PROTEIN NUF2"/>
    <property type="match status" value="1"/>
</dbReference>
<dbReference type="Pfam" id="PF03800">
    <property type="entry name" value="Nuf2"/>
    <property type="match status" value="1"/>
</dbReference>
<evidence type="ECO:0000255" key="1"/>
<evidence type="ECO:0000269" key="2">
    <source>
    </source>
</evidence>
<evidence type="ECO:0000269" key="3">
    <source>
    </source>
</evidence>
<evidence type="ECO:0000269" key="4">
    <source>
    </source>
</evidence>
<evidence type="ECO:0000269" key="5">
    <source>
    </source>
</evidence>
<evidence type="ECO:0000269" key="6">
    <source>
    </source>
</evidence>
<evidence type="ECO:0000269" key="7">
    <source>
    </source>
</evidence>
<evidence type="ECO:0000269" key="8">
    <source>
    </source>
</evidence>
<evidence type="ECO:0000269" key="9">
    <source>
    </source>
</evidence>
<evidence type="ECO:0000269" key="10">
    <source>
    </source>
</evidence>
<evidence type="ECO:0000269" key="11">
    <source>
    </source>
</evidence>
<evidence type="ECO:0000269" key="12">
    <source>
    </source>
</evidence>
<evidence type="ECO:0000269" key="13">
    <source>
    </source>
</evidence>
<evidence type="ECO:0000305" key="14"/>
<evidence type="ECO:0007744" key="15">
    <source>
    </source>
</evidence>
<evidence type="ECO:0007744" key="16">
    <source>
    </source>
</evidence>
<evidence type="ECO:0007829" key="17">
    <source>
        <dbReference type="PDB" id="2VE7"/>
    </source>
</evidence>
<evidence type="ECO:0007829" key="18">
    <source>
        <dbReference type="PDB" id="8G0P"/>
    </source>
</evidence>
<accession>Q9BZD4</accession>
<accession>Q8WU69</accession>
<accession>Q96HJ4</accession>
<accession>Q96Q78</accession>
<feature type="chain" id="PRO_0000249813" description="Kinetochore protein Nuf2">
    <location>
        <begin position="1"/>
        <end position="464"/>
    </location>
</feature>
<feature type="region of interest" description="Interaction with the N-terminus of NDC80">
    <location>
        <begin position="1"/>
        <end position="385"/>
    </location>
</feature>
<feature type="region of interest" description="Interaction with the C-terminus of NDC80 and the SPBC24-SPBC25 subcomplex">
    <location>
        <begin position="386"/>
        <end position="464"/>
    </location>
</feature>
<feature type="coiled-coil region" evidence="1">
    <location>
        <begin position="147"/>
        <end position="345"/>
    </location>
</feature>
<feature type="coiled-coil region" evidence="1">
    <location>
        <begin position="389"/>
        <end position="459"/>
    </location>
</feature>
<feature type="modified residue" description="N-acetylmethionine" evidence="15">
    <location>
        <position position="1"/>
    </location>
</feature>
<feature type="modified residue" description="Phosphoserine" evidence="16">
    <location>
        <position position="171"/>
    </location>
</feature>
<feature type="modified residue" description="Phosphoserine" evidence="16">
    <location>
        <position position="247"/>
    </location>
</feature>
<feature type="sequence variant" id="VAR_027490" description="In dbSNP:rs11802875." evidence="2 3">
    <original>S</original>
    <variation>L</variation>
    <location>
        <position position="229"/>
    </location>
</feature>
<feature type="sequence variant" id="VAR_027491" description="In dbSNP:rs16852767.">
    <original>S</original>
    <variation>R</variation>
    <location>
        <position position="239"/>
    </location>
</feature>
<feature type="helix" evidence="17">
    <location>
        <begin position="11"/>
        <end position="21"/>
    </location>
</feature>
<feature type="helix" evidence="17">
    <location>
        <begin position="25"/>
        <end position="29"/>
    </location>
</feature>
<feature type="helix" evidence="17">
    <location>
        <begin position="33"/>
        <end position="35"/>
    </location>
</feature>
<feature type="strand" evidence="17">
    <location>
        <begin position="37"/>
        <end position="39"/>
    </location>
</feature>
<feature type="helix" evidence="17">
    <location>
        <begin position="42"/>
        <end position="57"/>
    </location>
</feature>
<feature type="helix" evidence="17">
    <location>
        <begin position="62"/>
        <end position="64"/>
    </location>
</feature>
<feature type="helix" evidence="17">
    <location>
        <begin position="76"/>
        <end position="79"/>
    </location>
</feature>
<feature type="turn" evidence="17">
    <location>
        <begin position="80"/>
        <end position="82"/>
    </location>
</feature>
<feature type="helix" evidence="17">
    <location>
        <begin position="83"/>
        <end position="98"/>
    </location>
</feature>
<feature type="helix" evidence="17">
    <location>
        <begin position="106"/>
        <end position="110"/>
    </location>
</feature>
<feature type="helix" evidence="17">
    <location>
        <begin position="114"/>
        <end position="144"/>
    </location>
</feature>
<feature type="helix" evidence="17">
    <location>
        <begin position="147"/>
        <end position="164"/>
    </location>
</feature>
<feature type="helix" evidence="18">
    <location>
        <begin position="252"/>
        <end position="346"/>
    </location>
</feature>
<organism>
    <name type="scientific">Homo sapiens</name>
    <name type="common">Human</name>
    <dbReference type="NCBI Taxonomy" id="9606"/>
    <lineage>
        <taxon>Eukaryota</taxon>
        <taxon>Metazoa</taxon>
        <taxon>Chordata</taxon>
        <taxon>Craniata</taxon>
        <taxon>Vertebrata</taxon>
        <taxon>Euteleostomi</taxon>
        <taxon>Mammalia</taxon>
        <taxon>Eutheria</taxon>
        <taxon>Euarchontoglires</taxon>
        <taxon>Primates</taxon>
        <taxon>Haplorrhini</taxon>
        <taxon>Catarrhini</taxon>
        <taxon>Hominidae</taxon>
        <taxon>Homo</taxon>
    </lineage>
</organism>
<name>NUF2_HUMAN</name>
<comment type="function">
    <text evidence="4 6 8 9 10 11 12 13">Acts as a component of the essential kinetochore-associated NDC80 complex, which is required for chromosome segregation and spindle checkpoint activity (PubMed:12438418, PubMed:14654001, PubMed:15062103, PubMed:15235793, PubMed:15239953, PubMed:15548592, PubMed:17535814). Required for kinetochore integrity and the organization of stable microtubule binding sites in the outer plate of the kinetochore (PubMed:15548592). The NDC80 complex synergistically enhances the affinity of the SKA1 complex for microtubules and may allow the NDC80 complex to track depolymerizing microtubules (PubMed:23085020).</text>
</comment>
<comment type="subunit">
    <text evidence="5 7 12">Component of the NDC80 complex, which consists of NDC80/HEC1, CDCA1, SPBC24 and SPBC25. The NDC80 complex is formed by two subcomplexes composed of NDC80/HEC1-CDCA1 and SPBC24-SPBC25. Each subcomplex is formed by parallel interactions through the coiled-coil domains of individual subunits. Formation of a tetrameric complex is mediated by interactions between the C-terminal regions of both subunits of the NDC80/HEC1-CDCA1 subcomplex and the N-terminal regions of both subunits of the SPBC24-SPBC25 complex. The tetrameric NDC80 complex has an elongated rod-like structure with globular domains at either end. May interact with AURKB/Aurora-B. Directly interacts with CENPE; this interaction determines CENPE kinetochore localization.</text>
</comment>
<comment type="interaction">
    <interactant intactId="EBI-724102">
        <id>Q9BZD4</id>
    </interactant>
    <interactant intactId="EBI-1375040">
        <id>Q02224</id>
        <label>CENPE</label>
    </interactant>
    <organismsDiffer>false</organismsDiffer>
    <experiments>9</experiments>
</comment>
<comment type="interaction">
    <interactant intactId="EBI-724102">
        <id>Q9BZD4</id>
    </interactant>
    <interactant intactId="EBI-1045313">
        <id>Q9NV70</id>
        <label>EXOC1</label>
    </interactant>
    <organismsDiffer>false</organismsDiffer>
    <experiments>3</experiments>
</comment>
<comment type="interaction">
    <interactant intactId="EBI-724102">
        <id>Q9BZD4</id>
    </interactant>
    <interactant intactId="EBI-715849">
        <id>O14777</id>
        <label>NDC80</label>
    </interactant>
    <organismsDiffer>false</organismsDiffer>
    <experiments>16</experiments>
</comment>
<comment type="interaction">
    <interactant intactId="EBI-724102">
        <id>Q9BZD4</id>
    </interactant>
    <interactant intactId="EBI-15986834">
        <id>P33981-1</id>
        <label>TTK</label>
    </interactant>
    <organismsDiffer>false</organismsDiffer>
    <experiments>2</experiments>
</comment>
<comment type="subcellular location">
    <subcellularLocation>
        <location>Nucleus</location>
    </subcellularLocation>
    <subcellularLocation>
        <location>Chromosome</location>
        <location>Centromere</location>
        <location>Kinetochore</location>
    </subcellularLocation>
    <text>Localizes to kinetochores from late prophase to anaphase. Localizes specifically to the outer plate of the kinetochore. NDC80 is required for efficient kinetochore localization.</text>
</comment>
<comment type="PTM">
    <text evidence="5">Can be phosphorylated by AURKA and AURKB.</text>
</comment>
<comment type="similarity">
    <text evidence="14">Belongs to the NUF2 family.</text>
</comment>
<gene>
    <name type="primary">NUF2</name>
    <name type="synonym">CDCA1</name>
    <name type="synonym">NUF2R</name>
</gene>
<keyword id="KW-0002">3D-structure</keyword>
<keyword id="KW-0007">Acetylation</keyword>
<keyword id="KW-0131">Cell cycle</keyword>
<keyword id="KW-0132">Cell division</keyword>
<keyword id="KW-0137">Centromere</keyword>
<keyword id="KW-0158">Chromosome</keyword>
<keyword id="KW-0175">Coiled coil</keyword>
<keyword id="KW-0995">Kinetochore</keyword>
<keyword id="KW-0498">Mitosis</keyword>
<keyword id="KW-0539">Nucleus</keyword>
<keyword id="KW-0597">Phosphoprotein</keyword>
<keyword id="KW-1267">Proteomics identification</keyword>
<keyword id="KW-1185">Reference proteome</keyword>